<dbReference type="EC" id="1.14.13.216" evidence="3"/>
<dbReference type="SMR" id="P0DOW1"/>
<dbReference type="OMA" id="RWHKANW"/>
<dbReference type="GO" id="GO:0071949">
    <property type="term" value="F:FAD binding"/>
    <property type="evidence" value="ECO:0007669"/>
    <property type="project" value="InterPro"/>
</dbReference>
<dbReference type="GO" id="GO:0004497">
    <property type="term" value="F:monooxygenase activity"/>
    <property type="evidence" value="ECO:0007669"/>
    <property type="project" value="UniProtKB-KW"/>
</dbReference>
<dbReference type="Gene3D" id="3.50.50.60">
    <property type="entry name" value="FAD/NAD(P)-binding domain"/>
    <property type="match status" value="1"/>
</dbReference>
<dbReference type="InterPro" id="IPR002938">
    <property type="entry name" value="FAD-bd"/>
</dbReference>
<dbReference type="InterPro" id="IPR050493">
    <property type="entry name" value="FAD-dep_Monooxygenase_BioMet"/>
</dbReference>
<dbReference type="InterPro" id="IPR036188">
    <property type="entry name" value="FAD/NAD-bd_sf"/>
</dbReference>
<dbReference type="PANTHER" id="PTHR13789">
    <property type="entry name" value="MONOOXYGENASE"/>
    <property type="match status" value="1"/>
</dbReference>
<dbReference type="PANTHER" id="PTHR13789:SF236">
    <property type="entry name" value="MONOOXYGENASE, PUTATIVE (AFU_ORTHOLOGUE AFUA_6G12060)-RELATED"/>
    <property type="match status" value="1"/>
</dbReference>
<dbReference type="Pfam" id="PF01494">
    <property type="entry name" value="FAD_binding_3"/>
    <property type="match status" value="1"/>
</dbReference>
<dbReference type="PRINTS" id="PR00420">
    <property type="entry name" value="RNGMNOXGNASE"/>
</dbReference>
<dbReference type="SUPFAM" id="SSF51905">
    <property type="entry name" value="FAD/NAD(P)-binding domain"/>
    <property type="match status" value="1"/>
</dbReference>
<protein>
    <recommendedName>
        <fullName evidence="5">Asperlicin C monooxygenase</fullName>
        <ecNumber evidence="3">1.14.13.216</ecNumber>
    </recommendedName>
</protein>
<feature type="chain" id="PRO_0000438497" description="Asperlicin C monooxygenase">
    <location>
        <begin position="1"/>
        <end position="459"/>
    </location>
</feature>
<feature type="active site" evidence="2">
    <location>
        <position position="199"/>
    </location>
</feature>
<feature type="binding site" evidence="1">
    <location>
        <position position="49"/>
    </location>
    <ligand>
        <name>FAD</name>
        <dbReference type="ChEBI" id="CHEBI:57692"/>
    </ligand>
</feature>
<feature type="binding site" evidence="1">
    <location>
        <position position="62"/>
    </location>
    <ligand>
        <name>FAD</name>
        <dbReference type="ChEBI" id="CHEBI:57692"/>
    </ligand>
</feature>
<feature type="binding site" evidence="1">
    <location>
        <position position="121"/>
    </location>
    <ligand>
        <name>FAD</name>
        <dbReference type="ChEBI" id="CHEBI:57692"/>
    </ligand>
</feature>
<feature type="binding site" evidence="1">
    <location>
        <position position="323"/>
    </location>
    <ligand>
        <name>FAD</name>
        <dbReference type="ChEBI" id="CHEBI:57692"/>
    </ligand>
</feature>
<feature type="binding site" evidence="1">
    <location>
        <position position="336"/>
    </location>
    <ligand>
        <name>FAD</name>
        <dbReference type="ChEBI" id="CHEBI:57692"/>
    </ligand>
</feature>
<sequence length="459" mass="50701">MTMHVEVGPDSTAPPHSSGIKVIIIGLGIGGLAAAIECHRKGHSVIAFDKAQELKPVGDGIALAHNAVRVIEKWGKGTVGQELGRLSSRLNTTVIYDQTGRFIAEDKLDGFKAGEGHLLPRGELSQVMYKHAKSLGIDMRLASEVDEYWEDENSAGVIVDGEKITADCVVACDGVNSKARRHIIGYEPELRSSGSCVFRGWMTTEEPLVGSHWLLSHTDQADQVKVFAGDGVHVLLSTIQHGKMVFWLCTHKDNDCYDRKKEAPPTPEVDGMIHLIRDWPMRGQIESTIRKTLAKNVMHYPLLIREALSNWRSKGGRMVIIGDAAHPFLPVSGQGAAQAIEDAAVLAITLHLAGKEEVPLALHALEKIRLPRTALLQRSSLELERFWLNIDWPEVEKCPELLTIPRPKWIHGHDCQTHAYTEFAKVVSAIQMREEYHPLGGPRDSTNGESLLALLRQDT</sequence>
<evidence type="ECO:0000250" key="1">
    <source>
        <dbReference type="UniProtKB" id="B8M9J8"/>
    </source>
</evidence>
<evidence type="ECO:0000250" key="2">
    <source>
        <dbReference type="UniProtKB" id="L0E4H0"/>
    </source>
</evidence>
<evidence type="ECO:0000269" key="3">
    <source>
    </source>
</evidence>
<evidence type="ECO:0000303" key="4">
    <source>
    </source>
</evidence>
<evidence type="ECO:0000305" key="5"/>
<keyword id="KW-0274">FAD</keyword>
<keyword id="KW-0285">Flavoprotein</keyword>
<keyword id="KW-0503">Monooxygenase</keyword>
<keyword id="KW-0520">NAD</keyword>
<keyword id="KW-0521">NADP</keyword>
<keyword id="KW-0560">Oxidoreductase</keyword>
<organism>
    <name type="scientific">Petromyces alliaceus</name>
    <name type="common">Aspergillus alliaceus</name>
    <dbReference type="NCBI Taxonomy" id="209559"/>
    <lineage>
        <taxon>Eukaryota</taxon>
        <taxon>Fungi</taxon>
        <taxon>Dikarya</taxon>
        <taxon>Ascomycota</taxon>
        <taxon>Pezizomycotina</taxon>
        <taxon>Eurotiomycetes</taxon>
        <taxon>Eurotiomycetidae</taxon>
        <taxon>Eurotiales</taxon>
        <taxon>Aspergillaceae</taxon>
        <taxon>Aspergillus</taxon>
        <taxon>Aspergillus subgen. Circumdati</taxon>
    </lineage>
</organism>
<reference key="1">
    <citation type="journal article" date="2012" name="J. Am. Chem. Soc.">
        <title>Assembly of asperlicin peptidyl alkaloids from anthranilate and tryptophan: a two-enzyme pathway generates heptacyclic scaffold complexity in asperlicin E.</title>
        <authorList>
            <person name="Haynes S.W."/>
            <person name="Gao X."/>
            <person name="Tang Y."/>
            <person name="Walsh C.T."/>
        </authorList>
    </citation>
    <scope>NUCLEOTIDE SEQUENCE [GENOMIC DNA]</scope>
    <scope>FUNCTION</scope>
    <scope>CATALYTIC ACTIVITY</scope>
    <scope>COFACTOR</scope>
    <source>
        <strain>ATCC 20656 / MF4925</strain>
    </source>
</reference>
<gene>
    <name evidence="4" type="primary">aspB</name>
</gene>
<accession>P0DOW1</accession>
<comment type="function">
    <text evidence="3">Catalyzes the conversion of asperlicin A to form asperlicin E, a potent cholecystokinin receptor CCK(A) antagonist.</text>
</comment>
<comment type="catalytic activity">
    <reaction evidence="3">
        <text>asperlicin C + NADPH + O2 + H(+) = asperlicin E + NADP(+) + H2O</text>
        <dbReference type="Rhea" id="RHEA:49056"/>
        <dbReference type="ChEBI" id="CHEBI:15377"/>
        <dbReference type="ChEBI" id="CHEBI:15378"/>
        <dbReference type="ChEBI" id="CHEBI:15379"/>
        <dbReference type="ChEBI" id="CHEBI:57783"/>
        <dbReference type="ChEBI" id="CHEBI:58349"/>
        <dbReference type="ChEBI" id="CHEBI:90903"/>
        <dbReference type="ChEBI" id="CHEBI:90904"/>
        <dbReference type="EC" id="1.14.13.216"/>
    </reaction>
</comment>
<comment type="catalytic activity">
    <reaction evidence="3">
        <text>asperlicin C + NADH + O2 + H(+) = asperlicin E + NAD(+) + H2O</text>
        <dbReference type="Rhea" id="RHEA:49052"/>
        <dbReference type="ChEBI" id="CHEBI:15377"/>
        <dbReference type="ChEBI" id="CHEBI:15378"/>
        <dbReference type="ChEBI" id="CHEBI:15379"/>
        <dbReference type="ChEBI" id="CHEBI:57540"/>
        <dbReference type="ChEBI" id="CHEBI:57945"/>
        <dbReference type="ChEBI" id="CHEBI:90903"/>
        <dbReference type="ChEBI" id="CHEBI:90904"/>
        <dbReference type="EC" id="1.14.13.216"/>
    </reaction>
</comment>
<comment type="cofactor">
    <cofactor evidence="4">
        <name>FAD</name>
        <dbReference type="ChEBI" id="CHEBI:57692"/>
    </cofactor>
</comment>
<comment type="similarity">
    <text evidence="5">Belongs to the paxM FAD-dependent monooxygenase family.</text>
</comment>
<name>ASCM_PETAA</name>
<proteinExistence type="evidence at protein level"/>